<protein>
    <recommendedName>
        <fullName>Uncharacterized protein AF_0585</fullName>
    </recommendedName>
</protein>
<gene>
    <name type="ordered locus">AF_0585</name>
</gene>
<proteinExistence type="predicted"/>
<reference key="1">
    <citation type="journal article" date="1997" name="Nature">
        <title>The complete genome sequence of the hyperthermophilic, sulphate-reducing archaeon Archaeoglobus fulgidus.</title>
        <authorList>
            <person name="Klenk H.-P."/>
            <person name="Clayton R.A."/>
            <person name="Tomb J.-F."/>
            <person name="White O."/>
            <person name="Nelson K.E."/>
            <person name="Ketchum K.A."/>
            <person name="Dodson R.J."/>
            <person name="Gwinn M.L."/>
            <person name="Hickey E.K."/>
            <person name="Peterson J.D."/>
            <person name="Richardson D.L."/>
            <person name="Kerlavage A.R."/>
            <person name="Graham D.E."/>
            <person name="Kyrpides N.C."/>
            <person name="Fleischmann R.D."/>
            <person name="Quackenbush J."/>
            <person name="Lee N.H."/>
            <person name="Sutton G.G."/>
            <person name="Gill S.R."/>
            <person name="Kirkness E.F."/>
            <person name="Dougherty B.A."/>
            <person name="McKenney K."/>
            <person name="Adams M.D."/>
            <person name="Loftus B.J."/>
            <person name="Peterson S.N."/>
            <person name="Reich C.I."/>
            <person name="McNeil L.K."/>
            <person name="Badger J.H."/>
            <person name="Glodek A."/>
            <person name="Zhou L."/>
            <person name="Overbeek R."/>
            <person name="Gocayne J.D."/>
            <person name="Weidman J.F."/>
            <person name="McDonald L.A."/>
            <person name="Utterback T.R."/>
            <person name="Cotton M.D."/>
            <person name="Spriggs T."/>
            <person name="Artiach P."/>
            <person name="Kaine B.P."/>
            <person name="Sykes S.M."/>
            <person name="Sadow P.W."/>
            <person name="D'Andrea K.P."/>
            <person name="Bowman C."/>
            <person name="Fujii C."/>
            <person name="Garland S.A."/>
            <person name="Mason T.M."/>
            <person name="Olsen G.J."/>
            <person name="Fraser C.M."/>
            <person name="Smith H.O."/>
            <person name="Woese C.R."/>
            <person name="Venter J.C."/>
        </authorList>
    </citation>
    <scope>NUCLEOTIDE SEQUENCE [LARGE SCALE GENOMIC DNA]</scope>
    <source>
        <strain>ATCC 49558 / DSM 4304 / JCM 9628 / NBRC 100126 / VC-16</strain>
    </source>
</reference>
<name>Y585_ARCFU</name>
<accession>O29670</accession>
<comment type="subcellular location">
    <subcellularLocation>
        <location evidence="2">Cell membrane</location>
        <topology evidence="2">Multi-pass membrane protein</topology>
    </subcellularLocation>
</comment>
<evidence type="ECO:0000255" key="1"/>
<evidence type="ECO:0000305" key="2"/>
<feature type="chain" id="PRO_0000127891" description="Uncharacterized protein AF_0585">
    <location>
        <begin position="1"/>
        <end position="90"/>
    </location>
</feature>
<feature type="transmembrane region" description="Helical" evidence="1">
    <location>
        <begin position="5"/>
        <end position="27"/>
    </location>
</feature>
<feature type="transmembrane region" description="Helical" evidence="1">
    <location>
        <begin position="40"/>
        <end position="62"/>
    </location>
</feature>
<feature type="transmembrane region" description="Helical" evidence="1">
    <location>
        <begin position="67"/>
        <end position="89"/>
    </location>
</feature>
<organism>
    <name type="scientific">Archaeoglobus fulgidus (strain ATCC 49558 / DSM 4304 / JCM 9628 / NBRC 100126 / VC-16)</name>
    <dbReference type="NCBI Taxonomy" id="224325"/>
    <lineage>
        <taxon>Archaea</taxon>
        <taxon>Methanobacteriati</taxon>
        <taxon>Methanobacteriota</taxon>
        <taxon>Archaeoglobi</taxon>
        <taxon>Archaeoglobales</taxon>
        <taxon>Archaeoglobaceae</taxon>
        <taxon>Archaeoglobus</taxon>
    </lineage>
</organism>
<dbReference type="EMBL" id="AE000782">
    <property type="protein sequence ID" value="AAB90659.1"/>
    <property type="molecule type" value="Genomic_DNA"/>
</dbReference>
<dbReference type="PIR" id="A69323">
    <property type="entry name" value="A69323"/>
</dbReference>
<dbReference type="RefSeq" id="WP_010878089.1">
    <property type="nucleotide sequence ID" value="NC_000917.1"/>
</dbReference>
<dbReference type="STRING" id="224325.AF_0585"/>
<dbReference type="PaxDb" id="224325-AF_0585"/>
<dbReference type="EnsemblBacteria" id="AAB90659">
    <property type="protein sequence ID" value="AAB90659"/>
    <property type="gene ID" value="AF_0585"/>
</dbReference>
<dbReference type="KEGG" id="afu:AF_0585"/>
<dbReference type="eggNOG" id="arCOG10977">
    <property type="taxonomic scope" value="Archaea"/>
</dbReference>
<dbReference type="HOGENOM" id="CLU_2433668_0_0_2"/>
<dbReference type="Proteomes" id="UP000002199">
    <property type="component" value="Chromosome"/>
</dbReference>
<dbReference type="GO" id="GO:0005886">
    <property type="term" value="C:plasma membrane"/>
    <property type="evidence" value="ECO:0007669"/>
    <property type="project" value="UniProtKB-SubCell"/>
</dbReference>
<keyword id="KW-1003">Cell membrane</keyword>
<keyword id="KW-0472">Membrane</keyword>
<keyword id="KW-1185">Reference proteome</keyword>
<keyword id="KW-0812">Transmembrane</keyword>
<keyword id="KW-1133">Transmembrane helix</keyword>
<sequence>MGDYFDILTLILTAIYLLIGGGFIIYIYDTYKRTKQEFLIYLSIGFFLLIIGASLPVLTFVAQVLDMSVVVVAILMQIAGLSSIFYSIVR</sequence>